<name>SSRG_RAT</name>
<accession>Q08013</accession>
<accession>Q6P6U5</accession>
<keyword id="KW-0007">Acetylation</keyword>
<keyword id="KW-0256">Endoplasmic reticulum</keyword>
<keyword id="KW-0472">Membrane</keyword>
<keyword id="KW-0597">Phosphoprotein</keyword>
<keyword id="KW-1185">Reference proteome</keyword>
<keyword id="KW-0812">Transmembrane</keyword>
<keyword id="KW-1133">Transmembrane helix</keyword>
<evidence type="ECO:0000250" key="1">
    <source>
        <dbReference type="UniProtKB" id="Q9DCF9"/>
    </source>
</evidence>
<evidence type="ECO:0000250" key="2">
    <source>
        <dbReference type="UniProtKB" id="Q9UNL2"/>
    </source>
</evidence>
<evidence type="ECO:0000255" key="3"/>
<evidence type="ECO:0000305" key="4"/>
<evidence type="ECO:0007744" key="5">
    <source>
    </source>
</evidence>
<organism>
    <name type="scientific">Rattus norvegicus</name>
    <name type="common">Rat</name>
    <dbReference type="NCBI Taxonomy" id="10116"/>
    <lineage>
        <taxon>Eukaryota</taxon>
        <taxon>Metazoa</taxon>
        <taxon>Chordata</taxon>
        <taxon>Craniata</taxon>
        <taxon>Vertebrata</taxon>
        <taxon>Euteleostomi</taxon>
        <taxon>Mammalia</taxon>
        <taxon>Eutheria</taxon>
        <taxon>Euarchontoglires</taxon>
        <taxon>Glires</taxon>
        <taxon>Rodentia</taxon>
        <taxon>Myomorpha</taxon>
        <taxon>Muroidea</taxon>
        <taxon>Muridae</taxon>
        <taxon>Murinae</taxon>
        <taxon>Rattus</taxon>
    </lineage>
</organism>
<comment type="function">
    <text>TRAP proteins are part of a complex whose function is to bind calcium to the ER membrane and thereby regulate the retention of ER resident proteins.</text>
</comment>
<comment type="subunit">
    <text>Heterotetramer of TRAP-alpha, TRAP-beta, TRAP-delta and TRAP-gamma.</text>
</comment>
<comment type="subcellular location">
    <subcellularLocation>
        <location>Endoplasmic reticulum membrane</location>
        <topology>Multi-pass membrane protein</topology>
    </subcellularLocation>
</comment>
<comment type="similarity">
    <text evidence="4">Belongs to the TRAP-gamma family.</text>
</comment>
<feature type="chain" id="PRO_0000191693" description="Translocon-associated protein subunit gamma">
    <location>
        <begin position="1"/>
        <end position="185"/>
    </location>
</feature>
<feature type="topological domain" description="Lumenal" evidence="3">
    <location>
        <begin position="1"/>
        <end position="27"/>
    </location>
</feature>
<feature type="transmembrane region" description="Helical" evidence="3">
    <location>
        <begin position="28"/>
        <end position="48"/>
    </location>
</feature>
<feature type="topological domain" description="Cytoplasmic" evidence="3">
    <location>
        <begin position="49"/>
        <end position="54"/>
    </location>
</feature>
<feature type="transmembrane region" description="Helical" evidence="3">
    <location>
        <begin position="55"/>
        <end position="76"/>
    </location>
</feature>
<feature type="topological domain" description="Lumenal" evidence="3">
    <location>
        <begin position="77"/>
        <end position="135"/>
    </location>
</feature>
<feature type="transmembrane region" description="Helical" evidence="3">
    <location>
        <begin position="136"/>
        <end position="157"/>
    </location>
</feature>
<feature type="topological domain" description="Cytoplasmic" evidence="3">
    <location>
        <begin position="158"/>
        <end position="163"/>
    </location>
</feature>
<feature type="transmembrane region" description="Helical" evidence="3">
    <location>
        <begin position="164"/>
        <end position="184"/>
    </location>
</feature>
<feature type="modified residue" description="N-acetylmethionine" evidence="2">
    <location>
        <position position="1"/>
    </location>
</feature>
<feature type="modified residue" description="Phosphoserine" evidence="1">
    <location>
        <position position="7"/>
    </location>
</feature>
<feature type="modified residue" description="Phosphoserine" evidence="2">
    <location>
        <position position="11"/>
    </location>
</feature>
<feature type="modified residue" description="Phosphoserine" evidence="5">
    <location>
        <position position="105"/>
    </location>
</feature>
<feature type="sequence conflict" description="In Ref. 1; CAA78405." evidence="4" ref="1">
    <original>T</original>
    <variation>R</variation>
    <location>
        <position position="163"/>
    </location>
</feature>
<gene>
    <name type="primary">Ssr3</name>
</gene>
<protein>
    <recommendedName>
        <fullName>Translocon-associated protein subunit gamma</fullName>
        <shortName>TRAP-gamma</shortName>
    </recommendedName>
    <alternativeName>
        <fullName>Signal sequence receptor subunit gamma</fullName>
        <shortName>SSR-gamma</shortName>
    </alternativeName>
</protein>
<sequence>MAPKGGSKQQSEEDLLLQDFSRNLSAKSSALFFGNAFIVSAIPIWLYWRIWHMDLIQSAVLYSVMTLVSTYLVAFAYKNVKFVLKHKVAQKREDAVSKEVTRKLSEADNRKMSRKEKDERILWKKNEVADYEATTFSIFYNNTLFLVLVIVASFFILKNFNPTVNYILSISASSGLIALLSTGSK</sequence>
<proteinExistence type="evidence at protein level"/>
<dbReference type="EMBL" id="Z14030">
    <property type="protein sequence ID" value="CAA78405.1"/>
    <property type="molecule type" value="mRNA"/>
</dbReference>
<dbReference type="EMBL" id="BC062015">
    <property type="protein sequence ID" value="AAH62015.1"/>
    <property type="molecule type" value="mRNA"/>
</dbReference>
<dbReference type="PIR" id="S33294">
    <property type="entry name" value="S33294"/>
</dbReference>
<dbReference type="RefSeq" id="NP_112382.2">
    <property type="nucleotide sequence ID" value="NM_031120.2"/>
</dbReference>
<dbReference type="SMR" id="Q08013"/>
<dbReference type="FunCoup" id="Q08013">
    <property type="interactions" value="2735"/>
</dbReference>
<dbReference type="STRING" id="10116.ENSRNOP00000014912"/>
<dbReference type="iPTMnet" id="Q08013"/>
<dbReference type="PhosphoSitePlus" id="Q08013"/>
<dbReference type="jPOST" id="Q08013"/>
<dbReference type="GeneID" id="81784"/>
<dbReference type="KEGG" id="rno:81784"/>
<dbReference type="UCSC" id="RGD:621630">
    <property type="organism name" value="rat"/>
</dbReference>
<dbReference type="AGR" id="RGD:621630"/>
<dbReference type="CTD" id="6747"/>
<dbReference type="RGD" id="621630">
    <property type="gene designation" value="Ssr3"/>
</dbReference>
<dbReference type="InParanoid" id="Q08013"/>
<dbReference type="OrthoDB" id="10059529at2759"/>
<dbReference type="PhylomeDB" id="Q08013"/>
<dbReference type="PRO" id="PR:Q08013"/>
<dbReference type="Proteomes" id="UP000002494">
    <property type="component" value="Unplaced"/>
</dbReference>
<dbReference type="GO" id="GO:0005783">
    <property type="term" value="C:endoplasmic reticulum"/>
    <property type="evidence" value="ECO:0000318"/>
    <property type="project" value="GO_Central"/>
</dbReference>
<dbReference type="GO" id="GO:0005784">
    <property type="term" value="C:Sec61 translocon complex"/>
    <property type="evidence" value="ECO:0000303"/>
    <property type="project" value="RGD"/>
</dbReference>
<dbReference type="GO" id="GO:0006614">
    <property type="term" value="P:SRP-dependent cotranslational protein targeting to membrane"/>
    <property type="evidence" value="ECO:0007669"/>
    <property type="project" value="InterPro"/>
</dbReference>
<dbReference type="InterPro" id="IPR009779">
    <property type="entry name" value="SSR3"/>
</dbReference>
<dbReference type="PANTHER" id="PTHR13399:SF3">
    <property type="entry name" value="TRANSLOCON-ASSOCIATED PROTEIN SUBUNIT GAMMA"/>
    <property type="match status" value="1"/>
</dbReference>
<dbReference type="PANTHER" id="PTHR13399">
    <property type="entry name" value="TRANSLOCON-ASSOCIATED PROTEIN TRAP , GAMMA SUBUNIT"/>
    <property type="match status" value="1"/>
</dbReference>
<dbReference type="Pfam" id="PF07074">
    <property type="entry name" value="TRAP-gamma"/>
    <property type="match status" value="1"/>
</dbReference>
<reference key="1">
    <citation type="journal article" date="1993" name="Eur. J. Biochem.">
        <title>A tetrameric complex of membrane proteins in the endoplasmic reticulum.</title>
        <authorList>
            <person name="Hartmann E."/>
            <person name="Goerlich D."/>
            <person name="Kostka S."/>
            <person name="Otto A."/>
            <person name="Kraft R."/>
            <person name="Knespel S."/>
            <person name="Buerger E."/>
            <person name="Rapoport T.A."/>
            <person name="Prehn S."/>
        </authorList>
    </citation>
    <scope>NUCLEOTIDE SEQUENCE [MRNA]</scope>
    <source>
        <tissue>Liver</tissue>
    </source>
</reference>
<reference key="2">
    <citation type="journal article" date="2004" name="Genome Res.">
        <title>The status, quality, and expansion of the NIH full-length cDNA project: the Mammalian Gene Collection (MGC).</title>
        <authorList>
            <consortium name="The MGC Project Team"/>
        </authorList>
    </citation>
    <scope>NUCLEOTIDE SEQUENCE [LARGE SCALE MRNA]</scope>
    <source>
        <tissue>Prostate</tissue>
    </source>
</reference>
<reference key="3">
    <citation type="journal article" date="2012" name="Nat. Commun.">
        <title>Quantitative maps of protein phosphorylation sites across 14 different rat organs and tissues.</title>
        <authorList>
            <person name="Lundby A."/>
            <person name="Secher A."/>
            <person name="Lage K."/>
            <person name="Nordsborg N.B."/>
            <person name="Dmytriyev A."/>
            <person name="Lundby C."/>
            <person name="Olsen J.V."/>
        </authorList>
    </citation>
    <scope>PHOSPHORYLATION [LARGE SCALE ANALYSIS] AT SER-105</scope>
    <scope>IDENTIFICATION BY MASS SPECTROMETRY [LARGE SCALE ANALYSIS]</scope>
</reference>